<proteinExistence type="inferred from homology"/>
<comment type="function">
    <text evidence="1">Involved in DNA repair and RecF pathway recombination.</text>
</comment>
<comment type="similarity">
    <text evidence="1">Belongs to the RecO family.</text>
</comment>
<dbReference type="EMBL" id="AE016830">
    <property type="protein sequence ID" value="AAO82128.1"/>
    <property type="molecule type" value="Genomic_DNA"/>
</dbReference>
<dbReference type="RefSeq" id="NP_816058.1">
    <property type="nucleotide sequence ID" value="NC_004668.1"/>
</dbReference>
<dbReference type="RefSeq" id="WP_002359746.1">
    <property type="nucleotide sequence ID" value="NZ_KE136528.1"/>
</dbReference>
<dbReference type="SMR" id="Q831U0"/>
<dbReference type="STRING" id="226185.EF_2409"/>
<dbReference type="EnsemblBacteria" id="AAO82128">
    <property type="protein sequence ID" value="AAO82128"/>
    <property type="gene ID" value="EF_2409"/>
</dbReference>
<dbReference type="GeneID" id="60894458"/>
<dbReference type="KEGG" id="efa:EF2409"/>
<dbReference type="PATRIC" id="fig|226185.45.peg.1135"/>
<dbReference type="eggNOG" id="COG1381">
    <property type="taxonomic scope" value="Bacteria"/>
</dbReference>
<dbReference type="HOGENOM" id="CLU_066632_4_0_9"/>
<dbReference type="Proteomes" id="UP000001415">
    <property type="component" value="Chromosome"/>
</dbReference>
<dbReference type="GO" id="GO:0043590">
    <property type="term" value="C:bacterial nucleoid"/>
    <property type="evidence" value="ECO:0007669"/>
    <property type="project" value="TreeGrafter"/>
</dbReference>
<dbReference type="GO" id="GO:0006310">
    <property type="term" value="P:DNA recombination"/>
    <property type="evidence" value="ECO:0007669"/>
    <property type="project" value="UniProtKB-UniRule"/>
</dbReference>
<dbReference type="GO" id="GO:0006302">
    <property type="term" value="P:double-strand break repair"/>
    <property type="evidence" value="ECO:0007669"/>
    <property type="project" value="TreeGrafter"/>
</dbReference>
<dbReference type="Gene3D" id="2.40.50.140">
    <property type="entry name" value="Nucleic acid-binding proteins"/>
    <property type="match status" value="1"/>
</dbReference>
<dbReference type="Gene3D" id="1.20.1440.120">
    <property type="entry name" value="Recombination protein O, C-terminal domain"/>
    <property type="match status" value="1"/>
</dbReference>
<dbReference type="HAMAP" id="MF_00201">
    <property type="entry name" value="RecO"/>
    <property type="match status" value="1"/>
</dbReference>
<dbReference type="InterPro" id="IPR037278">
    <property type="entry name" value="ARFGAP/RecO"/>
</dbReference>
<dbReference type="InterPro" id="IPR022572">
    <property type="entry name" value="DNA_rep/recomb_RecO_N"/>
</dbReference>
<dbReference type="InterPro" id="IPR012340">
    <property type="entry name" value="NA-bd_OB-fold"/>
</dbReference>
<dbReference type="InterPro" id="IPR003717">
    <property type="entry name" value="RecO"/>
</dbReference>
<dbReference type="InterPro" id="IPR042242">
    <property type="entry name" value="RecO_C"/>
</dbReference>
<dbReference type="NCBIfam" id="TIGR00613">
    <property type="entry name" value="reco"/>
    <property type="match status" value="1"/>
</dbReference>
<dbReference type="PANTHER" id="PTHR33991">
    <property type="entry name" value="DNA REPAIR PROTEIN RECO"/>
    <property type="match status" value="1"/>
</dbReference>
<dbReference type="PANTHER" id="PTHR33991:SF1">
    <property type="entry name" value="DNA REPAIR PROTEIN RECO"/>
    <property type="match status" value="1"/>
</dbReference>
<dbReference type="Pfam" id="PF02565">
    <property type="entry name" value="RecO_C"/>
    <property type="match status" value="1"/>
</dbReference>
<dbReference type="Pfam" id="PF11967">
    <property type="entry name" value="RecO_N"/>
    <property type="match status" value="1"/>
</dbReference>
<dbReference type="SUPFAM" id="SSF57863">
    <property type="entry name" value="ArfGap/RecO-like zinc finger"/>
    <property type="match status" value="1"/>
</dbReference>
<dbReference type="SUPFAM" id="SSF50249">
    <property type="entry name" value="Nucleic acid-binding proteins"/>
    <property type="match status" value="1"/>
</dbReference>
<reference key="1">
    <citation type="journal article" date="2003" name="Science">
        <title>Role of mobile DNA in the evolution of vancomycin-resistant Enterococcus faecalis.</title>
        <authorList>
            <person name="Paulsen I.T."/>
            <person name="Banerjei L."/>
            <person name="Myers G.S.A."/>
            <person name="Nelson K.E."/>
            <person name="Seshadri R."/>
            <person name="Read T.D."/>
            <person name="Fouts D.E."/>
            <person name="Eisen J.A."/>
            <person name="Gill S.R."/>
            <person name="Heidelberg J.F."/>
            <person name="Tettelin H."/>
            <person name="Dodson R.J."/>
            <person name="Umayam L.A."/>
            <person name="Brinkac L.M."/>
            <person name="Beanan M.J."/>
            <person name="Daugherty S.C."/>
            <person name="DeBoy R.T."/>
            <person name="Durkin S.A."/>
            <person name="Kolonay J.F."/>
            <person name="Madupu R."/>
            <person name="Nelson W.C."/>
            <person name="Vamathevan J.J."/>
            <person name="Tran B."/>
            <person name="Upton J."/>
            <person name="Hansen T."/>
            <person name="Shetty J."/>
            <person name="Khouri H.M."/>
            <person name="Utterback T.R."/>
            <person name="Radune D."/>
            <person name="Ketchum K.A."/>
            <person name="Dougherty B.A."/>
            <person name="Fraser C.M."/>
        </authorList>
    </citation>
    <scope>NUCLEOTIDE SEQUENCE [LARGE SCALE GENOMIC DNA]</scope>
    <source>
        <strain>ATCC 700802 / V583</strain>
    </source>
</reference>
<name>RECO_ENTFA</name>
<accession>Q831U0</accession>
<organism>
    <name type="scientific">Enterococcus faecalis (strain ATCC 700802 / V583)</name>
    <dbReference type="NCBI Taxonomy" id="226185"/>
    <lineage>
        <taxon>Bacteria</taxon>
        <taxon>Bacillati</taxon>
        <taxon>Bacillota</taxon>
        <taxon>Bacilli</taxon>
        <taxon>Lactobacillales</taxon>
        <taxon>Enterococcaceae</taxon>
        <taxon>Enterococcus</taxon>
    </lineage>
</organism>
<feature type="chain" id="PRO_0000204952" description="DNA repair protein RecO">
    <location>
        <begin position="1"/>
        <end position="262"/>
    </location>
</feature>
<sequence length="262" mass="30817">MALGETKGIILFTKDFKEKDKLVKIFTESYGKLMFFVKGAHRKNNPLLPAILPFTEAVYIGNFREEGLSFLNSSKEVQPFRNIQQDIFINAYGTYILNLVDAAIEDQHYDPNLFQFTHMALSALNEQKDPEIITNIFEIQLLERFGVRPEWHHCVACGETQGKFDYSSKYSGVLCEKHWHLDEQRYHADPRAIHFIRLFSQVSYEKVQNIQVKEETKKSIRETIDMLYDEYVGLHLKSKKFIDQMKTWENTLKIPPRKKEEK</sequence>
<keyword id="KW-0227">DNA damage</keyword>
<keyword id="KW-0233">DNA recombination</keyword>
<keyword id="KW-0234">DNA repair</keyword>
<keyword id="KW-1185">Reference proteome</keyword>
<evidence type="ECO:0000255" key="1">
    <source>
        <dbReference type="HAMAP-Rule" id="MF_00201"/>
    </source>
</evidence>
<gene>
    <name evidence="1" type="primary">recO</name>
    <name type="ordered locus">EF_2409</name>
</gene>
<protein>
    <recommendedName>
        <fullName evidence="1">DNA repair protein RecO</fullName>
    </recommendedName>
    <alternativeName>
        <fullName evidence="1">Recombination protein O</fullName>
    </alternativeName>
</protein>